<evidence type="ECO:0000250" key="1"/>
<evidence type="ECO:0000305" key="2"/>
<name>HUTP_BACAN</name>
<keyword id="KW-0010">Activator</keyword>
<keyword id="KW-0369">Histidine metabolism</keyword>
<keyword id="KW-1185">Reference proteome</keyword>
<keyword id="KW-0694">RNA-binding</keyword>
<keyword id="KW-0804">Transcription</keyword>
<keyword id="KW-0805">Transcription regulation</keyword>
<accession>Q81Y44</accession>
<accession>Q6HVD9</accession>
<accession>Q6KPK8</accession>
<feature type="chain" id="PRO_0000203787" description="Hut operon positive regulatory protein">
    <location>
        <begin position="1"/>
        <end position="146"/>
    </location>
</feature>
<comment type="function">
    <text evidence="1">Antiterminator that binds to cis-acting regulatory sequences on the mRNA in the presence of histidine, thereby suppressing transcription termination and activating the hut operon for histidine utilization.</text>
</comment>
<comment type="subunit">
    <text evidence="1">Homohexamer.</text>
</comment>
<comment type="similarity">
    <text evidence="2">Belongs to the HutP family.</text>
</comment>
<proteinExistence type="inferred from homology"/>
<gene>
    <name type="primary">hutP</name>
    <name type="ordered locus">BA_3713</name>
    <name type="ordered locus">GBAA_3713</name>
    <name type="ordered locus">BAS3443</name>
</gene>
<organism>
    <name type="scientific">Bacillus anthracis</name>
    <dbReference type="NCBI Taxonomy" id="1392"/>
    <lineage>
        <taxon>Bacteria</taxon>
        <taxon>Bacillati</taxon>
        <taxon>Bacillota</taxon>
        <taxon>Bacilli</taxon>
        <taxon>Bacillales</taxon>
        <taxon>Bacillaceae</taxon>
        <taxon>Bacillus</taxon>
        <taxon>Bacillus cereus group</taxon>
    </lineage>
</organism>
<protein>
    <recommendedName>
        <fullName>Hut operon positive regulatory protein</fullName>
    </recommendedName>
</protein>
<dbReference type="EMBL" id="AE016879">
    <property type="protein sequence ID" value="AAP27462.1"/>
    <property type="molecule type" value="Genomic_DNA"/>
</dbReference>
<dbReference type="EMBL" id="AE017334">
    <property type="protein sequence ID" value="AAT32821.1"/>
    <property type="molecule type" value="Genomic_DNA"/>
</dbReference>
<dbReference type="EMBL" id="AE017225">
    <property type="protein sequence ID" value="AAT55750.1"/>
    <property type="molecule type" value="Genomic_DNA"/>
</dbReference>
<dbReference type="RefSeq" id="NP_845976.1">
    <property type="nucleotide sequence ID" value="NC_003997.3"/>
</dbReference>
<dbReference type="RefSeq" id="WP_000926516.1">
    <property type="nucleotide sequence ID" value="NZ_WXXJ01000029.1"/>
</dbReference>
<dbReference type="RefSeq" id="YP_029699.1">
    <property type="nucleotide sequence ID" value="NC_005945.1"/>
</dbReference>
<dbReference type="SMR" id="Q81Y44"/>
<dbReference type="STRING" id="261594.GBAA_3713"/>
<dbReference type="DNASU" id="1086203"/>
<dbReference type="GeneID" id="93007528"/>
<dbReference type="KEGG" id="ban:BA_3713"/>
<dbReference type="KEGG" id="bar:GBAA_3713"/>
<dbReference type="KEGG" id="bat:BAS3443"/>
<dbReference type="PATRIC" id="fig|198094.11.peg.3684"/>
<dbReference type="eggNOG" id="ENOG502ZFIH">
    <property type="taxonomic scope" value="Bacteria"/>
</dbReference>
<dbReference type="HOGENOM" id="CLU_148478_0_0_9"/>
<dbReference type="OMA" id="QHALYHA"/>
<dbReference type="OrthoDB" id="2388985at2"/>
<dbReference type="Proteomes" id="UP000000427">
    <property type="component" value="Chromosome"/>
</dbReference>
<dbReference type="Proteomes" id="UP000000594">
    <property type="component" value="Chromosome"/>
</dbReference>
<dbReference type="GO" id="GO:0003729">
    <property type="term" value="F:mRNA binding"/>
    <property type="evidence" value="ECO:0007669"/>
    <property type="project" value="UniProtKB-UniRule"/>
</dbReference>
<dbReference type="GO" id="GO:0006547">
    <property type="term" value="P:L-histidine metabolic process"/>
    <property type="evidence" value="ECO:0007669"/>
    <property type="project" value="UniProtKB-UniRule"/>
</dbReference>
<dbReference type="GO" id="GO:0010628">
    <property type="term" value="P:positive regulation of gene expression"/>
    <property type="evidence" value="ECO:0007669"/>
    <property type="project" value="UniProtKB-UniRule"/>
</dbReference>
<dbReference type="FunFam" id="3.40.1510.10:FF:000001">
    <property type="entry name" value="Hut operon positive regulatory protein"/>
    <property type="match status" value="1"/>
</dbReference>
<dbReference type="Gene3D" id="3.40.1510.10">
    <property type="entry name" value="Hut operon regulatory protein HutP"/>
    <property type="match status" value="1"/>
</dbReference>
<dbReference type="HAMAP" id="MF_00779">
    <property type="entry name" value="HutP"/>
    <property type="match status" value="1"/>
</dbReference>
<dbReference type="InterPro" id="IPR015111">
    <property type="entry name" value="Regulatory_HutP"/>
</dbReference>
<dbReference type="InterPro" id="IPR023552">
    <property type="entry name" value="Regulatory_HutP_bacillales"/>
</dbReference>
<dbReference type="InterPro" id="IPR036482">
    <property type="entry name" value="Regulatory_HutP_sf"/>
</dbReference>
<dbReference type="NCBIfam" id="NF002838">
    <property type="entry name" value="PRK03065.1"/>
    <property type="match status" value="1"/>
</dbReference>
<dbReference type="Pfam" id="PF09021">
    <property type="entry name" value="HutP"/>
    <property type="match status" value="1"/>
</dbReference>
<dbReference type="SUPFAM" id="SSF111064">
    <property type="entry name" value="Hut operon positive regulatory protein HutP"/>
    <property type="match status" value="1"/>
</dbReference>
<reference key="1">
    <citation type="journal article" date="2003" name="Nature">
        <title>The genome sequence of Bacillus anthracis Ames and comparison to closely related bacteria.</title>
        <authorList>
            <person name="Read T.D."/>
            <person name="Peterson S.N."/>
            <person name="Tourasse N.J."/>
            <person name="Baillie L.W."/>
            <person name="Paulsen I.T."/>
            <person name="Nelson K.E."/>
            <person name="Tettelin H."/>
            <person name="Fouts D.E."/>
            <person name="Eisen J.A."/>
            <person name="Gill S.R."/>
            <person name="Holtzapple E.K."/>
            <person name="Okstad O.A."/>
            <person name="Helgason E."/>
            <person name="Rilstone J."/>
            <person name="Wu M."/>
            <person name="Kolonay J.F."/>
            <person name="Beanan M.J."/>
            <person name="Dodson R.J."/>
            <person name="Brinkac L.M."/>
            <person name="Gwinn M.L."/>
            <person name="DeBoy R.T."/>
            <person name="Madpu R."/>
            <person name="Daugherty S.C."/>
            <person name="Durkin A.S."/>
            <person name="Haft D.H."/>
            <person name="Nelson W.C."/>
            <person name="Peterson J.D."/>
            <person name="Pop M."/>
            <person name="Khouri H.M."/>
            <person name="Radune D."/>
            <person name="Benton J.L."/>
            <person name="Mahamoud Y."/>
            <person name="Jiang L."/>
            <person name="Hance I.R."/>
            <person name="Weidman J.F."/>
            <person name="Berry K.J."/>
            <person name="Plaut R.D."/>
            <person name="Wolf A.M."/>
            <person name="Watkins K.L."/>
            <person name="Nierman W.C."/>
            <person name="Hazen A."/>
            <person name="Cline R.T."/>
            <person name="Redmond C."/>
            <person name="Thwaite J.E."/>
            <person name="White O."/>
            <person name="Salzberg S.L."/>
            <person name="Thomason B."/>
            <person name="Friedlander A.M."/>
            <person name="Koehler T.M."/>
            <person name="Hanna P.C."/>
            <person name="Kolstoe A.-B."/>
            <person name="Fraser C.M."/>
        </authorList>
    </citation>
    <scope>NUCLEOTIDE SEQUENCE [LARGE SCALE GENOMIC DNA]</scope>
    <source>
        <strain>Ames / isolate Porton</strain>
    </source>
</reference>
<reference key="2">
    <citation type="journal article" date="2009" name="J. Bacteriol.">
        <title>The complete genome sequence of Bacillus anthracis Ames 'Ancestor'.</title>
        <authorList>
            <person name="Ravel J."/>
            <person name="Jiang L."/>
            <person name="Stanley S.T."/>
            <person name="Wilson M.R."/>
            <person name="Decker R.S."/>
            <person name="Read T.D."/>
            <person name="Worsham P."/>
            <person name="Keim P.S."/>
            <person name="Salzberg S.L."/>
            <person name="Fraser-Liggett C.M."/>
            <person name="Rasko D.A."/>
        </authorList>
    </citation>
    <scope>NUCLEOTIDE SEQUENCE [LARGE SCALE GENOMIC DNA]</scope>
    <source>
        <strain>Ames ancestor</strain>
    </source>
</reference>
<reference key="3">
    <citation type="submission" date="2004-01" db="EMBL/GenBank/DDBJ databases">
        <title>Complete genome sequence of Bacillus anthracis Sterne.</title>
        <authorList>
            <person name="Brettin T.S."/>
            <person name="Bruce D."/>
            <person name="Challacombe J.F."/>
            <person name="Gilna P."/>
            <person name="Han C."/>
            <person name="Hill K."/>
            <person name="Hitchcock P."/>
            <person name="Jackson P."/>
            <person name="Keim P."/>
            <person name="Longmire J."/>
            <person name="Lucas S."/>
            <person name="Okinaka R."/>
            <person name="Richardson P."/>
            <person name="Rubin E."/>
            <person name="Tice H."/>
        </authorList>
    </citation>
    <scope>NUCLEOTIDE SEQUENCE [LARGE SCALE GENOMIC DNA]</scope>
    <source>
        <strain>Sterne</strain>
    </source>
</reference>
<sequence length="146" mass="15822">MLLQGTHRIGRMAMLLALADENESPVLSIPKGWKYCTGKVGSMNSQKVVAAMETAAKSNQVIETDVYRETHALYHAIMEALYGVTRGQIQLADVLRTVGLRFAIVRGTPYDGKKEGEWVAVALYGTIGAPVKGSEHEAIGLGINHI</sequence>